<proteinExistence type="evidence at protein level"/>
<comment type="function">
    <text evidence="1">Tetrapolymerization of the monopyrrole PBG into the hydroxymethylbilane pre-uroporphyrinogen in several discrete steps.</text>
</comment>
<comment type="catalytic activity">
    <reaction evidence="1">
        <text>4 porphobilinogen + H2O = hydroxymethylbilane + 4 NH4(+)</text>
        <dbReference type="Rhea" id="RHEA:13185"/>
        <dbReference type="ChEBI" id="CHEBI:15377"/>
        <dbReference type="ChEBI" id="CHEBI:28938"/>
        <dbReference type="ChEBI" id="CHEBI:57845"/>
        <dbReference type="ChEBI" id="CHEBI:58126"/>
        <dbReference type="EC" id="2.5.1.61"/>
    </reaction>
</comment>
<comment type="cofactor">
    <cofactor evidence="1">
        <name>dipyrromethane</name>
        <dbReference type="ChEBI" id="CHEBI:60342"/>
    </cofactor>
    <text evidence="1">Binds 1 dipyrromethane group covalently.</text>
</comment>
<comment type="pathway">
    <text evidence="1">Porphyrin-containing compound metabolism; protoporphyrin-IX biosynthesis; coproporphyrinogen-III from 5-aminolevulinate: step 2/4.</text>
</comment>
<comment type="subunit">
    <text evidence="1">Monomer.</text>
</comment>
<comment type="miscellaneous">
    <text evidence="1">The porphobilinogen subunits are added to the dipyrromethane group.</text>
</comment>
<comment type="similarity">
    <text evidence="1">Belongs to the HMBS family.</text>
</comment>
<evidence type="ECO:0000255" key="1">
    <source>
        <dbReference type="HAMAP-Rule" id="MF_00260"/>
    </source>
</evidence>
<sequence>MRKLVVGSRRSKLALTQSQQFINKLKAVEPNLEIEIKEIVTKGDRIVDKQLSKVGGKGLFVKEIQHELFEKNIDMAIHSLKDVPSVIPEGLTLGCIPDRELPFDAYISKTHTPLSQLPEGSIIGTSSLRRGAQILSKYPNLEIKWIRGNIDTRLEKLQTEDYDAIILAAAGLRRMGWSDDIVTSYLDRDTLLPAIGQGALGIECRSDDEELLTLLSKVHNDEVAKCVTAERTFLAEMDGSCQVPIAGYATISDQKEIEFTGLIMTPDGKERFEYTMNGTDPVELGKTVSNKLKEQGAYEIIKRLNEQH</sequence>
<protein>
    <recommendedName>
        <fullName evidence="1">Porphobilinogen deaminase</fullName>
        <shortName evidence="1">PBG</shortName>
        <ecNumber evidence="1">2.5.1.61</ecNumber>
    </recommendedName>
    <alternativeName>
        <fullName evidence="1">Hydroxymethylbilane synthase</fullName>
        <shortName evidence="1">HMBS</shortName>
    </alternativeName>
    <alternativeName>
        <fullName evidence="1">Pre-uroporphyrinogen synthase</fullName>
    </alternativeName>
</protein>
<gene>
    <name evidence="1" type="primary">hemC</name>
    <name type="ordered locus">SA1494</name>
</gene>
<name>HEM3_STAAN</name>
<feature type="chain" id="PRO_0000142990" description="Porphobilinogen deaminase">
    <location>
        <begin position="1"/>
        <end position="308"/>
    </location>
</feature>
<feature type="modified residue" description="S-(dipyrrolylmethanemethyl)cysteine" evidence="1">
    <location>
        <position position="241"/>
    </location>
</feature>
<dbReference type="EC" id="2.5.1.61" evidence="1"/>
<dbReference type="EMBL" id="BA000018">
    <property type="protein sequence ID" value="BAB42761.1"/>
    <property type="molecule type" value="Genomic_DNA"/>
</dbReference>
<dbReference type="PIR" id="D89950">
    <property type="entry name" value="D89950"/>
</dbReference>
<dbReference type="RefSeq" id="WP_001230232.1">
    <property type="nucleotide sequence ID" value="NC_002745.2"/>
</dbReference>
<dbReference type="SMR" id="P64341"/>
<dbReference type="EnsemblBacteria" id="BAB42761">
    <property type="protein sequence ID" value="BAB42761"/>
    <property type="gene ID" value="BAB42761"/>
</dbReference>
<dbReference type="KEGG" id="sau:SA1494"/>
<dbReference type="HOGENOM" id="CLU_019704_0_2_9"/>
<dbReference type="UniPathway" id="UPA00251">
    <property type="reaction ID" value="UER00319"/>
</dbReference>
<dbReference type="GO" id="GO:0005737">
    <property type="term" value="C:cytoplasm"/>
    <property type="evidence" value="ECO:0007669"/>
    <property type="project" value="TreeGrafter"/>
</dbReference>
<dbReference type="GO" id="GO:0004418">
    <property type="term" value="F:hydroxymethylbilane synthase activity"/>
    <property type="evidence" value="ECO:0007669"/>
    <property type="project" value="UniProtKB-UniRule"/>
</dbReference>
<dbReference type="GO" id="GO:0006782">
    <property type="term" value="P:protoporphyrinogen IX biosynthetic process"/>
    <property type="evidence" value="ECO:0007669"/>
    <property type="project" value="UniProtKB-UniRule"/>
</dbReference>
<dbReference type="CDD" id="cd13646">
    <property type="entry name" value="PBP2_EcHMBS_like"/>
    <property type="match status" value="1"/>
</dbReference>
<dbReference type="FunFam" id="3.30.160.40:FF:000001">
    <property type="entry name" value="Porphobilinogen deaminase"/>
    <property type="match status" value="1"/>
</dbReference>
<dbReference type="FunFam" id="3.40.190.10:FF:000004">
    <property type="entry name" value="Porphobilinogen deaminase"/>
    <property type="match status" value="1"/>
</dbReference>
<dbReference type="FunFam" id="3.40.190.10:FF:000005">
    <property type="entry name" value="Porphobilinogen deaminase"/>
    <property type="match status" value="1"/>
</dbReference>
<dbReference type="Gene3D" id="3.40.190.10">
    <property type="entry name" value="Periplasmic binding protein-like II"/>
    <property type="match status" value="2"/>
</dbReference>
<dbReference type="Gene3D" id="3.30.160.40">
    <property type="entry name" value="Porphobilinogen deaminase, C-terminal domain"/>
    <property type="match status" value="1"/>
</dbReference>
<dbReference type="HAMAP" id="MF_00260">
    <property type="entry name" value="Porphobil_deam"/>
    <property type="match status" value="1"/>
</dbReference>
<dbReference type="InterPro" id="IPR000860">
    <property type="entry name" value="HemC"/>
</dbReference>
<dbReference type="InterPro" id="IPR022419">
    <property type="entry name" value="Porphobilin_deaminase_cofac_BS"/>
</dbReference>
<dbReference type="InterPro" id="IPR022417">
    <property type="entry name" value="Porphobilin_deaminase_N"/>
</dbReference>
<dbReference type="InterPro" id="IPR022418">
    <property type="entry name" value="Porphobilinogen_deaminase_C"/>
</dbReference>
<dbReference type="InterPro" id="IPR036803">
    <property type="entry name" value="Porphobilinogen_deaminase_C_sf"/>
</dbReference>
<dbReference type="NCBIfam" id="TIGR00212">
    <property type="entry name" value="hemC"/>
    <property type="match status" value="1"/>
</dbReference>
<dbReference type="PANTHER" id="PTHR11557">
    <property type="entry name" value="PORPHOBILINOGEN DEAMINASE"/>
    <property type="match status" value="1"/>
</dbReference>
<dbReference type="PANTHER" id="PTHR11557:SF0">
    <property type="entry name" value="PORPHOBILINOGEN DEAMINASE"/>
    <property type="match status" value="1"/>
</dbReference>
<dbReference type="Pfam" id="PF01379">
    <property type="entry name" value="Porphobil_deam"/>
    <property type="match status" value="1"/>
</dbReference>
<dbReference type="Pfam" id="PF03900">
    <property type="entry name" value="Porphobil_deamC"/>
    <property type="match status" value="1"/>
</dbReference>
<dbReference type="PIRSF" id="PIRSF001438">
    <property type="entry name" value="4pyrrol_synth_OHMeBilane_synth"/>
    <property type="match status" value="1"/>
</dbReference>
<dbReference type="PRINTS" id="PR00151">
    <property type="entry name" value="PORPHBDMNASE"/>
</dbReference>
<dbReference type="SUPFAM" id="SSF53850">
    <property type="entry name" value="Periplasmic binding protein-like II"/>
    <property type="match status" value="1"/>
</dbReference>
<dbReference type="SUPFAM" id="SSF54782">
    <property type="entry name" value="Porphobilinogen deaminase (hydroxymethylbilane synthase), C-terminal domain"/>
    <property type="match status" value="1"/>
</dbReference>
<dbReference type="PROSITE" id="PS00533">
    <property type="entry name" value="PORPHOBILINOGEN_DEAM"/>
    <property type="match status" value="1"/>
</dbReference>
<reference key="1">
    <citation type="journal article" date="2001" name="Lancet">
        <title>Whole genome sequencing of meticillin-resistant Staphylococcus aureus.</title>
        <authorList>
            <person name="Kuroda M."/>
            <person name="Ohta T."/>
            <person name="Uchiyama I."/>
            <person name="Baba T."/>
            <person name="Yuzawa H."/>
            <person name="Kobayashi I."/>
            <person name="Cui L."/>
            <person name="Oguchi A."/>
            <person name="Aoki K."/>
            <person name="Nagai Y."/>
            <person name="Lian J.-Q."/>
            <person name="Ito T."/>
            <person name="Kanamori M."/>
            <person name="Matsumaru H."/>
            <person name="Maruyama A."/>
            <person name="Murakami H."/>
            <person name="Hosoyama A."/>
            <person name="Mizutani-Ui Y."/>
            <person name="Takahashi N.K."/>
            <person name="Sawano T."/>
            <person name="Inoue R."/>
            <person name="Kaito C."/>
            <person name="Sekimizu K."/>
            <person name="Hirakawa H."/>
            <person name="Kuhara S."/>
            <person name="Goto S."/>
            <person name="Yabuzaki J."/>
            <person name="Kanehisa M."/>
            <person name="Yamashita A."/>
            <person name="Oshima K."/>
            <person name="Furuya K."/>
            <person name="Yoshino C."/>
            <person name="Shiba T."/>
            <person name="Hattori M."/>
            <person name="Ogasawara N."/>
            <person name="Hayashi H."/>
            <person name="Hiramatsu K."/>
        </authorList>
    </citation>
    <scope>NUCLEOTIDE SEQUENCE [LARGE SCALE GENOMIC DNA]</scope>
    <source>
        <strain>N315</strain>
    </source>
</reference>
<reference key="2">
    <citation type="submission" date="2007-10" db="UniProtKB">
        <title>Shotgun proteomic analysis of total and membrane protein extracts of S. aureus strain N315.</title>
        <authorList>
            <person name="Vaezzadeh A.R."/>
            <person name="Deshusses J."/>
            <person name="Lescuyer P."/>
            <person name="Hochstrasser D.F."/>
        </authorList>
    </citation>
    <scope>IDENTIFICATION BY MASS SPECTROMETRY [LARGE SCALE ANALYSIS]</scope>
    <source>
        <strain>N315</strain>
    </source>
</reference>
<keyword id="KW-0627">Porphyrin biosynthesis</keyword>
<keyword id="KW-0808">Transferase</keyword>
<organism>
    <name type="scientific">Staphylococcus aureus (strain N315)</name>
    <dbReference type="NCBI Taxonomy" id="158879"/>
    <lineage>
        <taxon>Bacteria</taxon>
        <taxon>Bacillati</taxon>
        <taxon>Bacillota</taxon>
        <taxon>Bacilli</taxon>
        <taxon>Bacillales</taxon>
        <taxon>Staphylococcaceae</taxon>
        <taxon>Staphylococcus</taxon>
    </lineage>
</organism>
<accession>P64341</accession>
<accession>Q99TJ1</accession>